<reference key="1">
    <citation type="submission" date="2008-05" db="EMBL/GenBank/DDBJ databases">
        <title>Complete sequence of Shigella boydii serotype 18 strain BS512.</title>
        <authorList>
            <person name="Rasko D.A."/>
            <person name="Rosovitz M."/>
            <person name="Maurelli A.T."/>
            <person name="Myers G."/>
            <person name="Seshadri R."/>
            <person name="Cer R."/>
            <person name="Jiang L."/>
            <person name="Ravel J."/>
            <person name="Sebastian Y."/>
        </authorList>
    </citation>
    <scope>NUCLEOTIDE SEQUENCE [LARGE SCALE GENOMIC DNA]</scope>
    <source>
        <strain>CDC 3083-94 / BS512</strain>
    </source>
</reference>
<gene>
    <name evidence="1" type="primary">rpmB</name>
    <name type="ordered locus">SbBS512_E4062</name>
</gene>
<feature type="chain" id="PRO_1000121690" description="Large ribosomal subunit protein bL28">
    <location>
        <begin position="1"/>
        <end position="78"/>
    </location>
</feature>
<comment type="similarity">
    <text evidence="1">Belongs to the bacterial ribosomal protein bL28 family.</text>
</comment>
<accession>B2TTV1</accession>
<evidence type="ECO:0000255" key="1">
    <source>
        <dbReference type="HAMAP-Rule" id="MF_00373"/>
    </source>
</evidence>
<evidence type="ECO:0000305" key="2"/>
<dbReference type="EMBL" id="CP001063">
    <property type="protein sequence ID" value="ACD08404.1"/>
    <property type="molecule type" value="Genomic_DNA"/>
</dbReference>
<dbReference type="RefSeq" id="WP_000091955.1">
    <property type="nucleotide sequence ID" value="NC_010658.1"/>
</dbReference>
<dbReference type="SMR" id="B2TTV1"/>
<dbReference type="STRING" id="344609.SbBS512_E4062"/>
<dbReference type="GeneID" id="93778350"/>
<dbReference type="KEGG" id="sbc:SbBS512_E4062"/>
<dbReference type="HOGENOM" id="CLU_064548_3_1_6"/>
<dbReference type="Proteomes" id="UP000001030">
    <property type="component" value="Chromosome"/>
</dbReference>
<dbReference type="GO" id="GO:0022625">
    <property type="term" value="C:cytosolic large ribosomal subunit"/>
    <property type="evidence" value="ECO:0007669"/>
    <property type="project" value="TreeGrafter"/>
</dbReference>
<dbReference type="GO" id="GO:0003735">
    <property type="term" value="F:structural constituent of ribosome"/>
    <property type="evidence" value="ECO:0007669"/>
    <property type="project" value="InterPro"/>
</dbReference>
<dbReference type="GO" id="GO:0006412">
    <property type="term" value="P:translation"/>
    <property type="evidence" value="ECO:0007669"/>
    <property type="project" value="UniProtKB-UniRule"/>
</dbReference>
<dbReference type="FunFam" id="2.30.170.40:FF:000001">
    <property type="entry name" value="50S ribosomal protein L28"/>
    <property type="match status" value="1"/>
</dbReference>
<dbReference type="Gene3D" id="2.30.170.40">
    <property type="entry name" value="Ribosomal protein L28/L24"/>
    <property type="match status" value="1"/>
</dbReference>
<dbReference type="HAMAP" id="MF_00373">
    <property type="entry name" value="Ribosomal_bL28"/>
    <property type="match status" value="1"/>
</dbReference>
<dbReference type="InterPro" id="IPR026569">
    <property type="entry name" value="Ribosomal_bL28"/>
</dbReference>
<dbReference type="InterPro" id="IPR034704">
    <property type="entry name" value="Ribosomal_bL28/bL31-like_sf"/>
</dbReference>
<dbReference type="InterPro" id="IPR001383">
    <property type="entry name" value="Ribosomal_bL28_bact-type"/>
</dbReference>
<dbReference type="InterPro" id="IPR037147">
    <property type="entry name" value="Ribosomal_bL28_sf"/>
</dbReference>
<dbReference type="NCBIfam" id="TIGR00009">
    <property type="entry name" value="L28"/>
    <property type="match status" value="1"/>
</dbReference>
<dbReference type="PANTHER" id="PTHR13528">
    <property type="entry name" value="39S RIBOSOMAL PROTEIN L28, MITOCHONDRIAL"/>
    <property type="match status" value="1"/>
</dbReference>
<dbReference type="PANTHER" id="PTHR13528:SF2">
    <property type="entry name" value="LARGE RIBOSOMAL SUBUNIT PROTEIN BL28M"/>
    <property type="match status" value="1"/>
</dbReference>
<dbReference type="Pfam" id="PF00830">
    <property type="entry name" value="Ribosomal_L28"/>
    <property type="match status" value="1"/>
</dbReference>
<dbReference type="SUPFAM" id="SSF143800">
    <property type="entry name" value="L28p-like"/>
    <property type="match status" value="1"/>
</dbReference>
<proteinExistence type="inferred from homology"/>
<sequence>MSRVCQVTGKRPVTGNNRSHALNATKRRFLPNLHSHRFWVESEKRFVTLRVSAKGMRVIDKKGIDTVLAELRARGEKY</sequence>
<name>RL28_SHIB3</name>
<organism>
    <name type="scientific">Shigella boydii serotype 18 (strain CDC 3083-94 / BS512)</name>
    <dbReference type="NCBI Taxonomy" id="344609"/>
    <lineage>
        <taxon>Bacteria</taxon>
        <taxon>Pseudomonadati</taxon>
        <taxon>Pseudomonadota</taxon>
        <taxon>Gammaproteobacteria</taxon>
        <taxon>Enterobacterales</taxon>
        <taxon>Enterobacteriaceae</taxon>
        <taxon>Shigella</taxon>
    </lineage>
</organism>
<keyword id="KW-1185">Reference proteome</keyword>
<keyword id="KW-0687">Ribonucleoprotein</keyword>
<keyword id="KW-0689">Ribosomal protein</keyword>
<protein>
    <recommendedName>
        <fullName evidence="1">Large ribosomal subunit protein bL28</fullName>
    </recommendedName>
    <alternativeName>
        <fullName evidence="2">50S ribosomal protein L28</fullName>
    </alternativeName>
</protein>